<sequence length="563" mass="63070">MDTKTLIAAEIAKIVPELEQAAIFNLLETPKNSDMGDLAFPAFSLAKALRKAPQAIASDLAERIDASQFEKVAAVGPYVNFFLDKASISAQVLTQVIADGADYAQQDEGQGRHIAIDMSSPNIAKPFSIGHLRSTVIGDSLAHIFAKMGYKPVKINHLGDWGKQFGMLIVAYKKWGNEAAVQAHPIDELLKLYVRINAEAETDPSLDEEAREWFRRLEERDQEATELWQWFRDESLIEFNRLYDQLGVSFDSYNGEAFYNDKMDEVLELLEDKGLLVESKGAKVVNLEKYGIEHPALIKKSDGATLYITRDLAAALYRKRTYDFAKSVYVVGNEQAAHFKQLKAVLKEMGYDWSDDMTHVAFGLVTKGGAKLSTRKGNVILLEPTVAEAISRAANQIEAKNPKLANKEAVAHAVGVGAIKFYDLKTDRMNGYDFDLEAMVSFEGETGPYVQYAHARIQSILRKASFTPATDTSYSLNDPESWEIIKLIQDFPRIIKRAFDNFEPSIMAKFAIHLAQSFNKYYAHTRILEDDPERDNRLALCYATAIVLKEALRLLGVEAPNEM</sequence>
<name>SYR_STRE4</name>
<reference key="1">
    <citation type="journal article" date="2009" name="PLoS Pathog.">
        <title>Genomic evidence for the evolution of Streptococcus equi: host restriction, increased virulence, and genetic exchange with human pathogens.</title>
        <authorList>
            <person name="Holden M.T.G."/>
            <person name="Heather Z."/>
            <person name="Paillot R."/>
            <person name="Steward K.F."/>
            <person name="Webb K."/>
            <person name="Ainslie F."/>
            <person name="Jourdan T."/>
            <person name="Bason N.C."/>
            <person name="Holroyd N.E."/>
            <person name="Mungall K."/>
            <person name="Quail M.A."/>
            <person name="Sanders M."/>
            <person name="Simmonds M."/>
            <person name="Willey D."/>
            <person name="Brooks K."/>
            <person name="Aanensen D.M."/>
            <person name="Spratt B.G."/>
            <person name="Jolley K.A."/>
            <person name="Maiden M.C.J."/>
            <person name="Kehoe M."/>
            <person name="Chanter N."/>
            <person name="Bentley S.D."/>
            <person name="Robinson C."/>
            <person name="Maskell D.J."/>
            <person name="Parkhill J."/>
            <person name="Waller A.S."/>
        </authorList>
    </citation>
    <scope>NUCLEOTIDE SEQUENCE [LARGE SCALE GENOMIC DNA]</scope>
    <source>
        <strain>4047</strain>
    </source>
</reference>
<feature type="chain" id="PRO_1000198933" description="Arginine--tRNA ligase">
    <location>
        <begin position="1"/>
        <end position="563"/>
    </location>
</feature>
<feature type="short sequence motif" description="'HIGH' region">
    <location>
        <begin position="121"/>
        <end position="131"/>
    </location>
</feature>
<dbReference type="EC" id="6.1.1.19" evidence="1"/>
<dbReference type="EMBL" id="FM204883">
    <property type="protein sequence ID" value="CAW95535.1"/>
    <property type="molecule type" value="Genomic_DNA"/>
</dbReference>
<dbReference type="RefSeq" id="WP_015898668.1">
    <property type="nucleotide sequence ID" value="NC_012471.1"/>
</dbReference>
<dbReference type="SMR" id="C0MAS8"/>
<dbReference type="KEGG" id="seu:SEQ_2164"/>
<dbReference type="HOGENOM" id="CLU_006406_6_1_9"/>
<dbReference type="OrthoDB" id="9805987at2"/>
<dbReference type="Proteomes" id="UP000001365">
    <property type="component" value="Chromosome"/>
</dbReference>
<dbReference type="GO" id="GO:0005737">
    <property type="term" value="C:cytoplasm"/>
    <property type="evidence" value="ECO:0007669"/>
    <property type="project" value="UniProtKB-SubCell"/>
</dbReference>
<dbReference type="GO" id="GO:0004814">
    <property type="term" value="F:arginine-tRNA ligase activity"/>
    <property type="evidence" value="ECO:0007669"/>
    <property type="project" value="UniProtKB-UniRule"/>
</dbReference>
<dbReference type="GO" id="GO:0005524">
    <property type="term" value="F:ATP binding"/>
    <property type="evidence" value="ECO:0007669"/>
    <property type="project" value="UniProtKB-UniRule"/>
</dbReference>
<dbReference type="GO" id="GO:0006420">
    <property type="term" value="P:arginyl-tRNA aminoacylation"/>
    <property type="evidence" value="ECO:0007669"/>
    <property type="project" value="UniProtKB-UniRule"/>
</dbReference>
<dbReference type="CDD" id="cd07956">
    <property type="entry name" value="Anticodon_Ia_Arg"/>
    <property type="match status" value="1"/>
</dbReference>
<dbReference type="CDD" id="cd00671">
    <property type="entry name" value="ArgRS_core"/>
    <property type="match status" value="1"/>
</dbReference>
<dbReference type="FunFam" id="3.40.50.620:FF:000116">
    <property type="entry name" value="Arginine--tRNA ligase"/>
    <property type="match status" value="1"/>
</dbReference>
<dbReference type="FunFam" id="1.10.730.10:FF:000006">
    <property type="entry name" value="Arginyl-tRNA synthetase 2, mitochondrial"/>
    <property type="match status" value="1"/>
</dbReference>
<dbReference type="Gene3D" id="3.30.1360.70">
    <property type="entry name" value="Arginyl tRNA synthetase N-terminal domain"/>
    <property type="match status" value="1"/>
</dbReference>
<dbReference type="Gene3D" id="3.40.50.620">
    <property type="entry name" value="HUPs"/>
    <property type="match status" value="1"/>
</dbReference>
<dbReference type="Gene3D" id="1.10.730.10">
    <property type="entry name" value="Isoleucyl-tRNA Synthetase, Domain 1"/>
    <property type="match status" value="1"/>
</dbReference>
<dbReference type="HAMAP" id="MF_00123">
    <property type="entry name" value="Arg_tRNA_synth"/>
    <property type="match status" value="1"/>
</dbReference>
<dbReference type="InterPro" id="IPR001278">
    <property type="entry name" value="Arg-tRNA-ligase"/>
</dbReference>
<dbReference type="InterPro" id="IPR005148">
    <property type="entry name" value="Arg-tRNA-synth_N"/>
</dbReference>
<dbReference type="InterPro" id="IPR036695">
    <property type="entry name" value="Arg-tRNA-synth_N_sf"/>
</dbReference>
<dbReference type="InterPro" id="IPR035684">
    <property type="entry name" value="ArgRS_core"/>
</dbReference>
<dbReference type="InterPro" id="IPR008909">
    <property type="entry name" value="DALR_anticod-bd"/>
</dbReference>
<dbReference type="InterPro" id="IPR014729">
    <property type="entry name" value="Rossmann-like_a/b/a_fold"/>
</dbReference>
<dbReference type="InterPro" id="IPR009080">
    <property type="entry name" value="tRNAsynth_Ia_anticodon-bd"/>
</dbReference>
<dbReference type="NCBIfam" id="TIGR00456">
    <property type="entry name" value="argS"/>
    <property type="match status" value="1"/>
</dbReference>
<dbReference type="PANTHER" id="PTHR11956:SF5">
    <property type="entry name" value="ARGININE--TRNA LIGASE, CYTOPLASMIC"/>
    <property type="match status" value="1"/>
</dbReference>
<dbReference type="PANTHER" id="PTHR11956">
    <property type="entry name" value="ARGINYL-TRNA SYNTHETASE"/>
    <property type="match status" value="1"/>
</dbReference>
<dbReference type="Pfam" id="PF03485">
    <property type="entry name" value="Arg_tRNA_synt_N"/>
    <property type="match status" value="1"/>
</dbReference>
<dbReference type="Pfam" id="PF05746">
    <property type="entry name" value="DALR_1"/>
    <property type="match status" value="1"/>
</dbReference>
<dbReference type="Pfam" id="PF00750">
    <property type="entry name" value="tRNA-synt_1d"/>
    <property type="match status" value="1"/>
</dbReference>
<dbReference type="PRINTS" id="PR01038">
    <property type="entry name" value="TRNASYNTHARG"/>
</dbReference>
<dbReference type="SMART" id="SM01016">
    <property type="entry name" value="Arg_tRNA_synt_N"/>
    <property type="match status" value="1"/>
</dbReference>
<dbReference type="SMART" id="SM00836">
    <property type="entry name" value="DALR_1"/>
    <property type="match status" value="1"/>
</dbReference>
<dbReference type="SUPFAM" id="SSF47323">
    <property type="entry name" value="Anticodon-binding domain of a subclass of class I aminoacyl-tRNA synthetases"/>
    <property type="match status" value="1"/>
</dbReference>
<dbReference type="SUPFAM" id="SSF55190">
    <property type="entry name" value="Arginyl-tRNA synthetase (ArgRS), N-terminal 'additional' domain"/>
    <property type="match status" value="1"/>
</dbReference>
<dbReference type="SUPFAM" id="SSF52374">
    <property type="entry name" value="Nucleotidylyl transferase"/>
    <property type="match status" value="1"/>
</dbReference>
<gene>
    <name evidence="1" type="primary">argS</name>
    <name type="ordered locus">SEQ_2164</name>
</gene>
<comment type="catalytic activity">
    <reaction evidence="1">
        <text>tRNA(Arg) + L-arginine + ATP = L-arginyl-tRNA(Arg) + AMP + diphosphate</text>
        <dbReference type="Rhea" id="RHEA:20301"/>
        <dbReference type="Rhea" id="RHEA-COMP:9658"/>
        <dbReference type="Rhea" id="RHEA-COMP:9673"/>
        <dbReference type="ChEBI" id="CHEBI:30616"/>
        <dbReference type="ChEBI" id="CHEBI:32682"/>
        <dbReference type="ChEBI" id="CHEBI:33019"/>
        <dbReference type="ChEBI" id="CHEBI:78442"/>
        <dbReference type="ChEBI" id="CHEBI:78513"/>
        <dbReference type="ChEBI" id="CHEBI:456215"/>
        <dbReference type="EC" id="6.1.1.19"/>
    </reaction>
</comment>
<comment type="subunit">
    <text evidence="1">Monomer.</text>
</comment>
<comment type="subcellular location">
    <subcellularLocation>
        <location evidence="1">Cytoplasm</location>
    </subcellularLocation>
</comment>
<comment type="similarity">
    <text evidence="1">Belongs to the class-I aminoacyl-tRNA synthetase family.</text>
</comment>
<protein>
    <recommendedName>
        <fullName evidence="1">Arginine--tRNA ligase</fullName>
        <ecNumber evidence="1">6.1.1.19</ecNumber>
    </recommendedName>
    <alternativeName>
        <fullName evidence="1">Arginyl-tRNA synthetase</fullName>
        <shortName evidence="1">ArgRS</shortName>
    </alternativeName>
</protein>
<accession>C0MAS8</accession>
<proteinExistence type="inferred from homology"/>
<evidence type="ECO:0000255" key="1">
    <source>
        <dbReference type="HAMAP-Rule" id="MF_00123"/>
    </source>
</evidence>
<organism>
    <name type="scientific">Streptococcus equi subsp. equi (strain 4047)</name>
    <dbReference type="NCBI Taxonomy" id="553482"/>
    <lineage>
        <taxon>Bacteria</taxon>
        <taxon>Bacillati</taxon>
        <taxon>Bacillota</taxon>
        <taxon>Bacilli</taxon>
        <taxon>Lactobacillales</taxon>
        <taxon>Streptococcaceae</taxon>
        <taxon>Streptococcus</taxon>
    </lineage>
</organism>
<keyword id="KW-0030">Aminoacyl-tRNA synthetase</keyword>
<keyword id="KW-0067">ATP-binding</keyword>
<keyword id="KW-0963">Cytoplasm</keyword>
<keyword id="KW-0436">Ligase</keyword>
<keyword id="KW-0547">Nucleotide-binding</keyword>
<keyword id="KW-0648">Protein biosynthesis</keyword>